<proteinExistence type="inferred from homology"/>
<evidence type="ECO:0000255" key="1">
    <source>
        <dbReference type="HAMAP-Rule" id="MF_00337"/>
    </source>
</evidence>
<evidence type="ECO:0000305" key="2"/>
<organism>
    <name type="scientific">Mycobacterium leprae (strain TN)</name>
    <dbReference type="NCBI Taxonomy" id="272631"/>
    <lineage>
        <taxon>Bacteria</taxon>
        <taxon>Bacillati</taxon>
        <taxon>Actinomycetota</taxon>
        <taxon>Actinomycetes</taxon>
        <taxon>Mycobacteriales</taxon>
        <taxon>Mycobacteriaceae</taxon>
        <taxon>Mycobacterium</taxon>
    </lineage>
</organism>
<feature type="chain" id="PRO_0000206973" description="Exodeoxyribonuclease 7 small subunit">
    <location>
        <begin position="1"/>
        <end position="78"/>
    </location>
</feature>
<gene>
    <name evidence="1" type="primary">xseB</name>
    <name type="ordered locus">ML1941</name>
    <name type="ORF">MLCB1222.09</name>
</gene>
<keyword id="KW-0963">Cytoplasm</keyword>
<keyword id="KW-0269">Exonuclease</keyword>
<keyword id="KW-0378">Hydrolase</keyword>
<keyword id="KW-0540">Nuclease</keyword>
<keyword id="KW-1185">Reference proteome</keyword>
<dbReference type="EC" id="3.1.11.6" evidence="1"/>
<dbReference type="EMBL" id="AL049491">
    <property type="protein sequence ID" value="CAB39815.1"/>
    <property type="status" value="ALT_INIT"/>
    <property type="molecule type" value="Genomic_DNA"/>
</dbReference>
<dbReference type="EMBL" id="AL583923">
    <property type="protein sequence ID" value="CAC30896.1"/>
    <property type="status" value="ALT_INIT"/>
    <property type="molecule type" value="Genomic_DNA"/>
</dbReference>
<dbReference type="PIR" id="H87151">
    <property type="entry name" value="H87151"/>
</dbReference>
<dbReference type="SMR" id="Q9X784"/>
<dbReference type="STRING" id="272631.gene:17575793"/>
<dbReference type="KEGG" id="mle:ML1941"/>
<dbReference type="Leproma" id="ML1941"/>
<dbReference type="eggNOG" id="COG1722">
    <property type="taxonomic scope" value="Bacteria"/>
</dbReference>
<dbReference type="HOGENOM" id="CLU_145918_0_2_11"/>
<dbReference type="Proteomes" id="UP000000806">
    <property type="component" value="Chromosome"/>
</dbReference>
<dbReference type="GO" id="GO:0005829">
    <property type="term" value="C:cytosol"/>
    <property type="evidence" value="ECO:0007669"/>
    <property type="project" value="TreeGrafter"/>
</dbReference>
<dbReference type="GO" id="GO:0009318">
    <property type="term" value="C:exodeoxyribonuclease VII complex"/>
    <property type="evidence" value="ECO:0007669"/>
    <property type="project" value="InterPro"/>
</dbReference>
<dbReference type="GO" id="GO:0008855">
    <property type="term" value="F:exodeoxyribonuclease VII activity"/>
    <property type="evidence" value="ECO:0007669"/>
    <property type="project" value="UniProtKB-UniRule"/>
</dbReference>
<dbReference type="GO" id="GO:0006308">
    <property type="term" value="P:DNA catabolic process"/>
    <property type="evidence" value="ECO:0007669"/>
    <property type="project" value="UniProtKB-UniRule"/>
</dbReference>
<dbReference type="Gene3D" id="1.10.287.1040">
    <property type="entry name" value="Exonuclease VII, small subunit"/>
    <property type="match status" value="1"/>
</dbReference>
<dbReference type="HAMAP" id="MF_00337">
    <property type="entry name" value="Exonuc_7_S"/>
    <property type="match status" value="1"/>
</dbReference>
<dbReference type="InterPro" id="IPR003761">
    <property type="entry name" value="Exonuc_VII_S"/>
</dbReference>
<dbReference type="InterPro" id="IPR037004">
    <property type="entry name" value="Exonuc_VII_ssu_sf"/>
</dbReference>
<dbReference type="NCBIfam" id="NF002139">
    <property type="entry name" value="PRK00977.1-3"/>
    <property type="match status" value="1"/>
</dbReference>
<dbReference type="NCBIfam" id="TIGR01280">
    <property type="entry name" value="xseB"/>
    <property type="match status" value="1"/>
</dbReference>
<dbReference type="PANTHER" id="PTHR34137">
    <property type="entry name" value="EXODEOXYRIBONUCLEASE 7 SMALL SUBUNIT"/>
    <property type="match status" value="1"/>
</dbReference>
<dbReference type="PANTHER" id="PTHR34137:SF1">
    <property type="entry name" value="EXODEOXYRIBONUCLEASE 7 SMALL SUBUNIT"/>
    <property type="match status" value="1"/>
</dbReference>
<dbReference type="Pfam" id="PF02609">
    <property type="entry name" value="Exonuc_VII_S"/>
    <property type="match status" value="1"/>
</dbReference>
<dbReference type="PIRSF" id="PIRSF006488">
    <property type="entry name" value="Exonuc_VII_S"/>
    <property type="match status" value="1"/>
</dbReference>
<dbReference type="SUPFAM" id="SSF116842">
    <property type="entry name" value="XseB-like"/>
    <property type="match status" value="1"/>
</dbReference>
<reference key="1">
    <citation type="journal article" date="2001" name="Nature">
        <title>Massive gene decay in the leprosy bacillus.</title>
        <authorList>
            <person name="Cole S.T."/>
            <person name="Eiglmeier K."/>
            <person name="Parkhill J."/>
            <person name="James K.D."/>
            <person name="Thomson N.R."/>
            <person name="Wheeler P.R."/>
            <person name="Honore N."/>
            <person name="Garnier T."/>
            <person name="Churcher C.M."/>
            <person name="Harris D.E."/>
            <person name="Mungall K.L."/>
            <person name="Basham D."/>
            <person name="Brown D."/>
            <person name="Chillingworth T."/>
            <person name="Connor R."/>
            <person name="Davies R.M."/>
            <person name="Devlin K."/>
            <person name="Duthoy S."/>
            <person name="Feltwell T."/>
            <person name="Fraser A."/>
            <person name="Hamlin N."/>
            <person name="Holroyd S."/>
            <person name="Hornsby T."/>
            <person name="Jagels K."/>
            <person name="Lacroix C."/>
            <person name="Maclean J."/>
            <person name="Moule S."/>
            <person name="Murphy L.D."/>
            <person name="Oliver K."/>
            <person name="Quail M.A."/>
            <person name="Rajandream M.A."/>
            <person name="Rutherford K.M."/>
            <person name="Rutter S."/>
            <person name="Seeger K."/>
            <person name="Simon S."/>
            <person name="Simmonds M."/>
            <person name="Skelton J."/>
            <person name="Squares R."/>
            <person name="Squares S."/>
            <person name="Stevens K."/>
            <person name="Taylor K."/>
            <person name="Whitehead S."/>
            <person name="Woodward J.R."/>
            <person name="Barrell B.G."/>
        </authorList>
    </citation>
    <scope>NUCLEOTIDE SEQUENCE [LARGE SCALE GENOMIC DNA]</scope>
    <source>
        <strain>TN</strain>
    </source>
</reference>
<comment type="function">
    <text evidence="1">Bidirectionally degrades single-stranded DNA into large acid-insoluble oligonucleotides, which are then degraded further into small acid-soluble oligonucleotides.</text>
</comment>
<comment type="catalytic activity">
    <reaction evidence="1">
        <text>Exonucleolytic cleavage in either 5'- to 3'- or 3'- to 5'-direction to yield nucleoside 5'-phosphates.</text>
        <dbReference type="EC" id="3.1.11.6"/>
    </reaction>
</comment>
<comment type="subunit">
    <text evidence="1">Heterooligomer composed of large and small subunits.</text>
</comment>
<comment type="subcellular location">
    <subcellularLocation>
        <location evidence="1">Cytoplasm</location>
    </subcellularLocation>
</comment>
<comment type="similarity">
    <text evidence="1 2">Belongs to the XseB family.</text>
</comment>
<comment type="sequence caution" evidence="2">
    <conflict type="erroneous initiation">
        <sequence resource="EMBL-CDS" id="CAB39815"/>
    </conflict>
    <text>Extended N-terminus.</text>
</comment>
<comment type="sequence caution" evidence="2">
    <conflict type="erroneous initiation">
        <sequence resource="EMBL-CDS" id="CAC30896"/>
    </conflict>
    <text>Extended N-terminus.</text>
</comment>
<accession>Q9X784</accession>
<protein>
    <recommendedName>
        <fullName evidence="1">Exodeoxyribonuclease 7 small subunit</fullName>
        <ecNumber evidence="1">3.1.11.6</ecNumber>
    </recommendedName>
    <alternativeName>
        <fullName evidence="1">Exodeoxyribonuclease VII small subunit</fullName>
        <shortName evidence="1">Exonuclease VII small subunit</shortName>
    </alternativeName>
</protein>
<sequence>MRSTTPINTTPINQLGYEACRDELIEVVRLLEQGGLNLDMSLKLWERGEQLAKRCEEHLDGARQRVADVLSARQVEEA</sequence>
<name>EX7S_MYCLE</name>